<keyword id="KW-1185">Reference proteome</keyword>
<keyword id="KW-0687">Ribonucleoprotein</keyword>
<keyword id="KW-0689">Ribosomal protein</keyword>
<keyword id="KW-0694">RNA-binding</keyword>
<keyword id="KW-0699">rRNA-binding</keyword>
<gene>
    <name evidence="1" type="primary">rpsS</name>
    <name type="ordered locus">Hore_01210</name>
</gene>
<accession>B8D0C8</accession>
<organism>
    <name type="scientific">Halothermothrix orenii (strain H 168 / OCM 544 / DSM 9562)</name>
    <dbReference type="NCBI Taxonomy" id="373903"/>
    <lineage>
        <taxon>Bacteria</taxon>
        <taxon>Bacillati</taxon>
        <taxon>Bacillota</taxon>
        <taxon>Clostridia</taxon>
        <taxon>Halanaerobiales</taxon>
        <taxon>Halothermotrichaceae</taxon>
        <taxon>Halothermothrix</taxon>
    </lineage>
</organism>
<evidence type="ECO:0000255" key="1">
    <source>
        <dbReference type="HAMAP-Rule" id="MF_00531"/>
    </source>
</evidence>
<evidence type="ECO:0000305" key="2"/>
<reference key="1">
    <citation type="journal article" date="2009" name="PLoS ONE">
        <title>Genome analysis of the anaerobic thermohalophilic bacterium Halothermothrix orenii.</title>
        <authorList>
            <person name="Mavromatis K."/>
            <person name="Ivanova N."/>
            <person name="Anderson I."/>
            <person name="Lykidis A."/>
            <person name="Hooper S.D."/>
            <person name="Sun H."/>
            <person name="Kunin V."/>
            <person name="Lapidus A."/>
            <person name="Hugenholtz P."/>
            <person name="Patel B."/>
            <person name="Kyrpides N.C."/>
        </authorList>
    </citation>
    <scope>NUCLEOTIDE SEQUENCE [LARGE SCALE GENOMIC DNA]</scope>
    <source>
        <strain>H 168 / OCM 544 / DSM 9562</strain>
    </source>
</reference>
<protein>
    <recommendedName>
        <fullName evidence="1">Small ribosomal subunit protein uS19</fullName>
    </recommendedName>
    <alternativeName>
        <fullName evidence="2">30S ribosomal protein S19</fullName>
    </alternativeName>
</protein>
<proteinExistence type="inferred from homology"/>
<name>RS19_HALOH</name>
<feature type="chain" id="PRO_1000146395" description="Small ribosomal subunit protein uS19">
    <location>
        <begin position="1"/>
        <end position="94"/>
    </location>
</feature>
<comment type="function">
    <text evidence="1">Protein S19 forms a complex with S13 that binds strongly to the 16S ribosomal RNA.</text>
</comment>
<comment type="similarity">
    <text evidence="1">Belongs to the universal ribosomal protein uS19 family.</text>
</comment>
<sequence length="94" mass="10641">MGRSLKKGPYVDKKLLNKIKEMNESGKKKVIKTWSRDSTIFPEMVGHTIAVHDGQKHVPVYITEDMVGHKLGEFAPTRKFRGHGAHTERSTALK</sequence>
<dbReference type="EMBL" id="CP001098">
    <property type="protein sequence ID" value="ACL68882.1"/>
    <property type="molecule type" value="Genomic_DNA"/>
</dbReference>
<dbReference type="RefSeq" id="WP_012635080.1">
    <property type="nucleotide sequence ID" value="NC_011899.1"/>
</dbReference>
<dbReference type="SMR" id="B8D0C8"/>
<dbReference type="STRING" id="373903.Hore_01210"/>
<dbReference type="KEGG" id="hor:Hore_01210"/>
<dbReference type="eggNOG" id="COG0185">
    <property type="taxonomic scope" value="Bacteria"/>
</dbReference>
<dbReference type="HOGENOM" id="CLU_144911_0_1_9"/>
<dbReference type="OrthoDB" id="9797833at2"/>
<dbReference type="Proteomes" id="UP000000719">
    <property type="component" value="Chromosome"/>
</dbReference>
<dbReference type="GO" id="GO:0005737">
    <property type="term" value="C:cytoplasm"/>
    <property type="evidence" value="ECO:0007669"/>
    <property type="project" value="UniProtKB-ARBA"/>
</dbReference>
<dbReference type="GO" id="GO:0015935">
    <property type="term" value="C:small ribosomal subunit"/>
    <property type="evidence" value="ECO:0007669"/>
    <property type="project" value="InterPro"/>
</dbReference>
<dbReference type="GO" id="GO:0019843">
    <property type="term" value="F:rRNA binding"/>
    <property type="evidence" value="ECO:0007669"/>
    <property type="project" value="UniProtKB-UniRule"/>
</dbReference>
<dbReference type="GO" id="GO:0003735">
    <property type="term" value="F:structural constituent of ribosome"/>
    <property type="evidence" value="ECO:0007669"/>
    <property type="project" value="InterPro"/>
</dbReference>
<dbReference type="GO" id="GO:0000028">
    <property type="term" value="P:ribosomal small subunit assembly"/>
    <property type="evidence" value="ECO:0007669"/>
    <property type="project" value="TreeGrafter"/>
</dbReference>
<dbReference type="GO" id="GO:0006412">
    <property type="term" value="P:translation"/>
    <property type="evidence" value="ECO:0007669"/>
    <property type="project" value="UniProtKB-UniRule"/>
</dbReference>
<dbReference type="FunFam" id="3.30.860.10:FF:000001">
    <property type="entry name" value="30S ribosomal protein S19"/>
    <property type="match status" value="1"/>
</dbReference>
<dbReference type="Gene3D" id="3.30.860.10">
    <property type="entry name" value="30s Ribosomal Protein S19, Chain A"/>
    <property type="match status" value="1"/>
</dbReference>
<dbReference type="HAMAP" id="MF_00531">
    <property type="entry name" value="Ribosomal_uS19"/>
    <property type="match status" value="1"/>
</dbReference>
<dbReference type="InterPro" id="IPR002222">
    <property type="entry name" value="Ribosomal_uS19"/>
</dbReference>
<dbReference type="InterPro" id="IPR005732">
    <property type="entry name" value="Ribosomal_uS19_bac-type"/>
</dbReference>
<dbReference type="InterPro" id="IPR020934">
    <property type="entry name" value="Ribosomal_uS19_CS"/>
</dbReference>
<dbReference type="InterPro" id="IPR023575">
    <property type="entry name" value="Ribosomal_uS19_SF"/>
</dbReference>
<dbReference type="NCBIfam" id="TIGR01050">
    <property type="entry name" value="rpsS_bact"/>
    <property type="match status" value="1"/>
</dbReference>
<dbReference type="PANTHER" id="PTHR11880">
    <property type="entry name" value="RIBOSOMAL PROTEIN S19P FAMILY MEMBER"/>
    <property type="match status" value="1"/>
</dbReference>
<dbReference type="PANTHER" id="PTHR11880:SF8">
    <property type="entry name" value="SMALL RIBOSOMAL SUBUNIT PROTEIN US19M"/>
    <property type="match status" value="1"/>
</dbReference>
<dbReference type="Pfam" id="PF00203">
    <property type="entry name" value="Ribosomal_S19"/>
    <property type="match status" value="1"/>
</dbReference>
<dbReference type="PIRSF" id="PIRSF002144">
    <property type="entry name" value="Ribosomal_S19"/>
    <property type="match status" value="1"/>
</dbReference>
<dbReference type="PRINTS" id="PR00975">
    <property type="entry name" value="RIBOSOMALS19"/>
</dbReference>
<dbReference type="SUPFAM" id="SSF54570">
    <property type="entry name" value="Ribosomal protein S19"/>
    <property type="match status" value="1"/>
</dbReference>
<dbReference type="PROSITE" id="PS00323">
    <property type="entry name" value="RIBOSOMAL_S19"/>
    <property type="match status" value="1"/>
</dbReference>